<reference key="1">
    <citation type="journal article" date="2003" name="Science">
        <title>Role of mobile DNA in the evolution of vancomycin-resistant Enterococcus faecalis.</title>
        <authorList>
            <person name="Paulsen I.T."/>
            <person name="Banerjei L."/>
            <person name="Myers G.S.A."/>
            <person name="Nelson K.E."/>
            <person name="Seshadri R."/>
            <person name="Read T.D."/>
            <person name="Fouts D.E."/>
            <person name="Eisen J.A."/>
            <person name="Gill S.R."/>
            <person name="Heidelberg J.F."/>
            <person name="Tettelin H."/>
            <person name="Dodson R.J."/>
            <person name="Umayam L.A."/>
            <person name="Brinkac L.M."/>
            <person name="Beanan M.J."/>
            <person name="Daugherty S.C."/>
            <person name="DeBoy R.T."/>
            <person name="Durkin S.A."/>
            <person name="Kolonay J.F."/>
            <person name="Madupu R."/>
            <person name="Nelson W.C."/>
            <person name="Vamathevan J.J."/>
            <person name="Tran B."/>
            <person name="Upton J."/>
            <person name="Hansen T."/>
            <person name="Shetty J."/>
            <person name="Khouri H.M."/>
            <person name="Utterback T.R."/>
            <person name="Radune D."/>
            <person name="Ketchum K.A."/>
            <person name="Dougherty B.A."/>
            <person name="Fraser C.M."/>
        </authorList>
    </citation>
    <scope>NUCLEOTIDE SEQUENCE [LARGE SCALE GENOMIC DNA]</scope>
    <source>
        <strain>ATCC 700802 / V583</strain>
    </source>
</reference>
<reference key="2">
    <citation type="journal article" date="2010" name="PLoS Comput. Biol.">
        <title>Cholera- and anthrax-like toxins are among several new ADP-ribosyltransferases.</title>
        <authorList>
            <person name="Fieldhouse R.J."/>
            <person name="Turgeon Z."/>
            <person name="White D."/>
            <person name="Merrill A.R."/>
        </authorList>
    </citation>
    <scope>FUNCTION AS A TOXIN</scope>
    <scope>EXPRESSION IN YEAST</scope>
    <scope>SUBCELLULAR LOCATION</scope>
    <scope>MUTAGENESIS OF GLU-461 AND GLU-463</scope>
    <source>
        <strain>ATCC 700802 / V583</strain>
    </source>
</reference>
<evidence type="ECO:0000255" key="1"/>
<evidence type="ECO:0000255" key="2">
    <source>
        <dbReference type="PROSITE-ProRule" id="PRU01340"/>
    </source>
</evidence>
<evidence type="ECO:0000269" key="3">
    <source>
    </source>
</evidence>
<evidence type="ECO:0000305" key="4"/>
<keyword id="KW-0175">Coiled coil</keyword>
<keyword id="KW-0328">Glycosyltransferase</keyword>
<keyword id="KW-0520">NAD</keyword>
<keyword id="KW-0521">NADP</keyword>
<keyword id="KW-0547">Nucleotide-binding</keyword>
<keyword id="KW-0548">Nucleotidyltransferase</keyword>
<keyword id="KW-1185">Reference proteome</keyword>
<keyword id="KW-0964">Secreted</keyword>
<keyword id="KW-0800">Toxin</keyword>
<keyword id="KW-0808">Transferase</keyword>
<keyword id="KW-0843">Virulence</keyword>
<organism>
    <name type="scientific">Enterococcus faecalis (strain ATCC 700802 / V583)</name>
    <dbReference type="NCBI Taxonomy" id="226185"/>
    <lineage>
        <taxon>Bacteria</taxon>
        <taxon>Bacillati</taxon>
        <taxon>Bacillota</taxon>
        <taxon>Bacilli</taxon>
        <taxon>Lactobacillales</taxon>
        <taxon>Enterococcaceae</taxon>
        <taxon>Enterococcus</taxon>
    </lineage>
</organism>
<name>EFV_ENTFA</name>
<accession>Q838U8</accession>
<comment type="function">
    <text evidence="3">A probable mono(ADP-ribosyl)transferase, it may ADP-ribosylate Arg in target protein(s). Upon expression in yeast cells causes cell death.</text>
</comment>
<comment type="catalytic activity">
    <reaction>
        <text>L-arginyl-[protein] + NAD(+) = N(omega)-(ADP-D-ribosyl)-L-arginyl-[protein] + nicotinamide + H(+)</text>
        <dbReference type="Rhea" id="RHEA:19149"/>
        <dbReference type="Rhea" id="RHEA-COMP:10532"/>
        <dbReference type="Rhea" id="RHEA-COMP:15087"/>
        <dbReference type="ChEBI" id="CHEBI:15378"/>
        <dbReference type="ChEBI" id="CHEBI:17154"/>
        <dbReference type="ChEBI" id="CHEBI:29965"/>
        <dbReference type="ChEBI" id="CHEBI:57540"/>
        <dbReference type="ChEBI" id="CHEBI:142554"/>
        <dbReference type="EC" id="2.4.2.31"/>
    </reaction>
</comment>
<comment type="subcellular location">
    <subcellularLocation>
        <location evidence="4">Secreted</location>
    </subcellularLocation>
</comment>
<protein>
    <recommendedName>
        <fullName>NAD(+)--arginine ADP-ribosyltransferase EFV</fullName>
        <ecNumber>2.4.2.31</ecNumber>
    </recommendedName>
    <alternativeName>
        <fullName>Putative mono(ADP-ribosyl)transferase</fullName>
        <shortName>mADPRT</shortName>
        <shortName>mART</shortName>
    </alternativeName>
    <alternativeName>
        <fullName>Toxin EFV</fullName>
    </alternativeName>
</protein>
<feature type="chain" id="PRO_0000410944" description="NAD(+)--arginine ADP-ribosyltransferase EFV">
    <location>
        <begin position="1"/>
        <end position="487"/>
    </location>
</feature>
<feature type="domain" description="TR mART core" evidence="2">
    <location>
        <begin position="315"/>
        <end position="487"/>
    </location>
</feature>
<feature type="coiled-coil region" evidence="1">
    <location>
        <begin position="2"/>
        <end position="51"/>
    </location>
</feature>
<feature type="active site" evidence="2">
    <location>
        <position position="394"/>
    </location>
</feature>
<feature type="active site" evidence="2">
    <location>
        <position position="415"/>
    </location>
</feature>
<feature type="active site" evidence="2">
    <location>
        <position position="463"/>
    </location>
</feature>
<feature type="binding site" evidence="1">
    <location>
        <begin position="346"/>
        <end position="358"/>
    </location>
    <ligand>
        <name>NAD(+)</name>
        <dbReference type="ChEBI" id="CHEBI:57540"/>
    </ligand>
</feature>
<feature type="binding site" evidence="1">
    <location>
        <begin position="394"/>
        <end position="400"/>
    </location>
    <ligand>
        <name>NAD(+)</name>
        <dbReference type="ChEBI" id="CHEBI:57540"/>
    </ligand>
</feature>
<feature type="binding site" evidence="1">
    <location>
        <position position="463"/>
    </location>
    <ligand>
        <name>NAD(+)</name>
        <dbReference type="ChEBI" id="CHEBI:57540"/>
    </ligand>
</feature>
<feature type="mutagenesis site" description="Restores 60% growth in yeast.">
    <original>ESE</original>
    <variation>ASA</variation>
    <location>
        <begin position="461"/>
        <end position="463"/>
    </location>
</feature>
<feature type="mutagenesis site" description="Restores 30% growth in yeast." evidence="3">
    <original>E</original>
    <variation>A</variation>
    <location>
        <position position="461"/>
    </location>
</feature>
<feature type="mutagenesis site" description="Restores 40% growth in yeast." evidence="3">
    <original>E</original>
    <variation>A</variation>
    <location>
        <position position="463"/>
    </location>
</feature>
<dbReference type="EC" id="2.4.2.31"/>
<dbReference type="EMBL" id="AE016830">
    <property type="protein sequence ID" value="AAO80198.1"/>
    <property type="molecule type" value="Genomic_DNA"/>
</dbReference>
<dbReference type="RefSeq" id="NP_814127.1">
    <property type="nucleotide sequence ID" value="NC_004668.1"/>
</dbReference>
<dbReference type="RefSeq" id="WP_011109439.1">
    <property type="nucleotide sequence ID" value="NZ_KE136524.1"/>
</dbReference>
<dbReference type="SMR" id="Q838U8"/>
<dbReference type="STRING" id="226185.EF_0335"/>
<dbReference type="EnsemblBacteria" id="AAO80198">
    <property type="protein sequence ID" value="AAO80198"/>
    <property type="gene ID" value="EF_0335"/>
</dbReference>
<dbReference type="KEGG" id="efa:EF0335"/>
<dbReference type="PATRIC" id="fig|226185.9.peg.311"/>
<dbReference type="eggNOG" id="COG2369">
    <property type="taxonomic scope" value="Bacteria"/>
</dbReference>
<dbReference type="HOGENOM" id="CLU_041007_0_0_9"/>
<dbReference type="Proteomes" id="UP000001415">
    <property type="component" value="Chromosome"/>
</dbReference>
<dbReference type="GO" id="GO:0005576">
    <property type="term" value="C:extracellular region"/>
    <property type="evidence" value="ECO:0007669"/>
    <property type="project" value="UniProtKB-SubCell"/>
</dbReference>
<dbReference type="GO" id="GO:0106274">
    <property type="term" value="F:NAD+-protein-arginine ADP-ribosyltransferase activity"/>
    <property type="evidence" value="ECO:0007669"/>
    <property type="project" value="UniProtKB-EC"/>
</dbReference>
<dbReference type="GO" id="GO:0000166">
    <property type="term" value="F:nucleotide binding"/>
    <property type="evidence" value="ECO:0007669"/>
    <property type="project" value="UniProtKB-KW"/>
</dbReference>
<dbReference type="GO" id="GO:0016779">
    <property type="term" value="F:nucleotidyltransferase activity"/>
    <property type="evidence" value="ECO:0007669"/>
    <property type="project" value="UniProtKB-KW"/>
</dbReference>
<dbReference type="GO" id="GO:0090729">
    <property type="term" value="F:toxin activity"/>
    <property type="evidence" value="ECO:0007669"/>
    <property type="project" value="UniProtKB-KW"/>
</dbReference>
<dbReference type="Gene3D" id="3.90.176.10">
    <property type="entry name" value="Toxin ADP-ribosyltransferase, Chain A, domain 1"/>
    <property type="match status" value="1"/>
</dbReference>
<dbReference type="InterPro" id="IPR003540">
    <property type="entry name" value="ADP-ribosyltransferase"/>
</dbReference>
<dbReference type="InterPro" id="IPR006528">
    <property type="entry name" value="Phage_head_morphogenesis_dom"/>
</dbReference>
<dbReference type="Pfam" id="PF03496">
    <property type="entry name" value="ADPrib_exo_Tox"/>
    <property type="match status" value="1"/>
</dbReference>
<dbReference type="Pfam" id="PF04233">
    <property type="entry name" value="Phage_Mu_F"/>
    <property type="match status" value="1"/>
</dbReference>
<dbReference type="SUPFAM" id="SSF56399">
    <property type="entry name" value="ADP-ribosylation"/>
    <property type="match status" value="1"/>
</dbReference>
<dbReference type="PROSITE" id="PS51996">
    <property type="entry name" value="TR_MART"/>
    <property type="match status" value="1"/>
</dbReference>
<gene>
    <name type="ordered locus">EF_0335</name>
</gene>
<proteinExistence type="evidence at protein level"/>
<sequence length="487" mass="56055">MSQLNKWQKELQALQKANYQETDNQLFNVYRQSLIDIKKRLKVYTENAESLSFSTRLEVERLFSVADEINAILQLNSPKVEKTIKGYSAKQAEQGYYGLWYTLEQSQNIALSMPLINHDYIMNLVNAPVAGKRLSKRLYKYRDELAQNVTNNIITGLFEGKSYAEIARWINEETEASYKQALRIARTEAGRTQSVTTQKGYEEAKELGINIKKKWLATIDKHTRRTHQELDGKEVDVDEEFTIRGHSAKGPRMFGVASEDVNCRCTTIEVVDGISPELRKDNESKEMSEFKSYDEWYADRIRQNESKPKPNFTELDFFGQSDLQDDSDKWVAGLKPEQVNAMKDYTSDAFAKMNKILRNEKYNPREKPYLVNIIQNLDDAISKFKLKHDIITYRGVSANEYDAILNGNVFKEFKSTSINKKVAEDFLNFTSANKDGRVVKFLIPKGTQGAYIGTNSSMKKESEFLLNRNLKYTVEIVDNILEVTILG</sequence>